<comment type="function">
    <text evidence="1">Provides the (R)-glutamate required for cell wall biosynthesis.</text>
</comment>
<comment type="catalytic activity">
    <reaction evidence="1">
        <text>L-glutamate = D-glutamate</text>
        <dbReference type="Rhea" id="RHEA:12813"/>
        <dbReference type="ChEBI" id="CHEBI:29985"/>
        <dbReference type="ChEBI" id="CHEBI:29986"/>
        <dbReference type="EC" id="5.1.1.3"/>
    </reaction>
</comment>
<comment type="pathway">
    <text evidence="1">Cell wall biogenesis; peptidoglycan biosynthesis.</text>
</comment>
<comment type="similarity">
    <text evidence="1">Belongs to the aspartate/glutamate racemases family.</text>
</comment>
<organism>
    <name type="scientific">Pseudomonas syringae pv. tomato (strain ATCC BAA-871 / DC3000)</name>
    <dbReference type="NCBI Taxonomy" id="223283"/>
    <lineage>
        <taxon>Bacteria</taxon>
        <taxon>Pseudomonadati</taxon>
        <taxon>Pseudomonadota</taxon>
        <taxon>Gammaproteobacteria</taxon>
        <taxon>Pseudomonadales</taxon>
        <taxon>Pseudomonadaceae</taxon>
        <taxon>Pseudomonas</taxon>
    </lineage>
</organism>
<proteinExistence type="inferred from homology"/>
<gene>
    <name evidence="1" type="primary">murI</name>
    <name type="ordered locus">PSPTO_1112</name>
</gene>
<keyword id="KW-0133">Cell shape</keyword>
<keyword id="KW-0961">Cell wall biogenesis/degradation</keyword>
<keyword id="KW-0413">Isomerase</keyword>
<keyword id="KW-0573">Peptidoglycan synthesis</keyword>
<keyword id="KW-1185">Reference proteome</keyword>
<feature type="chain" id="PRO_0000095499" description="Glutamate racemase">
    <location>
        <begin position="1"/>
        <end position="275"/>
    </location>
</feature>
<feature type="active site" description="Proton donor/acceptor" evidence="1">
    <location>
        <position position="85"/>
    </location>
</feature>
<feature type="active site" description="Proton donor/acceptor" evidence="1">
    <location>
        <position position="196"/>
    </location>
</feature>
<feature type="binding site" evidence="1">
    <location>
        <begin position="22"/>
        <end position="23"/>
    </location>
    <ligand>
        <name>substrate</name>
    </ligand>
</feature>
<feature type="binding site" evidence="1">
    <location>
        <begin position="54"/>
        <end position="55"/>
    </location>
    <ligand>
        <name>substrate</name>
    </ligand>
</feature>
<feature type="binding site" evidence="1">
    <location>
        <begin position="86"/>
        <end position="87"/>
    </location>
    <ligand>
        <name>substrate</name>
    </ligand>
</feature>
<feature type="binding site" evidence="1">
    <location>
        <begin position="197"/>
        <end position="198"/>
    </location>
    <ligand>
        <name>substrate</name>
    </ligand>
</feature>
<accession>Q888B8</accession>
<name>MURI_PSESM</name>
<dbReference type="EC" id="5.1.1.3" evidence="1"/>
<dbReference type="EMBL" id="AE016853">
    <property type="protein sequence ID" value="AAO54641.1"/>
    <property type="molecule type" value="Genomic_DNA"/>
</dbReference>
<dbReference type="RefSeq" id="NP_790946.1">
    <property type="nucleotide sequence ID" value="NC_004578.1"/>
</dbReference>
<dbReference type="RefSeq" id="WP_005768855.1">
    <property type="nucleotide sequence ID" value="NC_004578.1"/>
</dbReference>
<dbReference type="SMR" id="Q888B8"/>
<dbReference type="STRING" id="223283.PSPTO_1112"/>
<dbReference type="GeneID" id="1182748"/>
<dbReference type="KEGG" id="pst:PSPTO_1112"/>
<dbReference type="PATRIC" id="fig|223283.9.peg.1122"/>
<dbReference type="eggNOG" id="COG0796">
    <property type="taxonomic scope" value="Bacteria"/>
</dbReference>
<dbReference type="HOGENOM" id="CLU_052344_1_0_6"/>
<dbReference type="OrthoDB" id="9801055at2"/>
<dbReference type="PhylomeDB" id="Q888B8"/>
<dbReference type="UniPathway" id="UPA00219"/>
<dbReference type="Proteomes" id="UP000002515">
    <property type="component" value="Chromosome"/>
</dbReference>
<dbReference type="GO" id="GO:0008881">
    <property type="term" value="F:glutamate racemase activity"/>
    <property type="evidence" value="ECO:0007669"/>
    <property type="project" value="UniProtKB-UniRule"/>
</dbReference>
<dbReference type="GO" id="GO:0071555">
    <property type="term" value="P:cell wall organization"/>
    <property type="evidence" value="ECO:0007669"/>
    <property type="project" value="UniProtKB-KW"/>
</dbReference>
<dbReference type="GO" id="GO:0009252">
    <property type="term" value="P:peptidoglycan biosynthetic process"/>
    <property type="evidence" value="ECO:0007669"/>
    <property type="project" value="UniProtKB-UniRule"/>
</dbReference>
<dbReference type="GO" id="GO:0008360">
    <property type="term" value="P:regulation of cell shape"/>
    <property type="evidence" value="ECO:0007669"/>
    <property type="project" value="UniProtKB-KW"/>
</dbReference>
<dbReference type="FunFam" id="3.40.50.1860:FF:000001">
    <property type="entry name" value="Glutamate racemase"/>
    <property type="match status" value="1"/>
</dbReference>
<dbReference type="Gene3D" id="3.40.50.1860">
    <property type="match status" value="2"/>
</dbReference>
<dbReference type="HAMAP" id="MF_00258">
    <property type="entry name" value="Glu_racemase"/>
    <property type="match status" value="1"/>
</dbReference>
<dbReference type="InterPro" id="IPR015942">
    <property type="entry name" value="Asp/Glu/hydantoin_racemase"/>
</dbReference>
<dbReference type="InterPro" id="IPR001920">
    <property type="entry name" value="Asp/Glu_race"/>
</dbReference>
<dbReference type="InterPro" id="IPR018187">
    <property type="entry name" value="Asp/Glu_racemase_AS_1"/>
</dbReference>
<dbReference type="InterPro" id="IPR033134">
    <property type="entry name" value="Asp/Glu_racemase_AS_2"/>
</dbReference>
<dbReference type="InterPro" id="IPR004391">
    <property type="entry name" value="Glu_race"/>
</dbReference>
<dbReference type="NCBIfam" id="TIGR00067">
    <property type="entry name" value="glut_race"/>
    <property type="match status" value="1"/>
</dbReference>
<dbReference type="PANTHER" id="PTHR21198">
    <property type="entry name" value="GLUTAMATE RACEMASE"/>
    <property type="match status" value="1"/>
</dbReference>
<dbReference type="PANTHER" id="PTHR21198:SF2">
    <property type="entry name" value="GLUTAMATE RACEMASE"/>
    <property type="match status" value="1"/>
</dbReference>
<dbReference type="Pfam" id="PF01177">
    <property type="entry name" value="Asp_Glu_race"/>
    <property type="match status" value="1"/>
</dbReference>
<dbReference type="SUPFAM" id="SSF53681">
    <property type="entry name" value="Aspartate/glutamate racemase"/>
    <property type="match status" value="2"/>
</dbReference>
<dbReference type="PROSITE" id="PS00923">
    <property type="entry name" value="ASP_GLU_RACEMASE_1"/>
    <property type="match status" value="1"/>
</dbReference>
<dbReference type="PROSITE" id="PS00924">
    <property type="entry name" value="ASP_GLU_RACEMASE_2"/>
    <property type="match status" value="1"/>
</dbReference>
<protein>
    <recommendedName>
        <fullName evidence="1">Glutamate racemase</fullName>
        <ecNumber evidence="1">5.1.1.3</ecNumber>
    </recommendedName>
</protein>
<sequence length="275" mass="29519">MPDIPVSQPVNPGCDAPVGVFDSGVGGLSVLNEIRQTLPNESLLYLADCGHIPYGEKTPEFIIERCLIIADFFHGQGAKALVVACNTATAAGVAHIRQRYPDWPIVGMEPAVKPAAEATRSGVVGVLATTGTLQSARFAALLDRFASDVSVVTQPCPGLVELIETGDLVSPQIRQLLQRYVEPLLAARCDTIILGCTHYPFLKPLLREMLPASVTLIDTGAAVARQLQRLLSRSGLLASGPARDTLYWSSDIPDNFGKILPFLSQMSGNVRSFRL</sequence>
<evidence type="ECO:0000255" key="1">
    <source>
        <dbReference type="HAMAP-Rule" id="MF_00258"/>
    </source>
</evidence>
<reference key="1">
    <citation type="journal article" date="2003" name="Proc. Natl. Acad. Sci. U.S.A.">
        <title>The complete genome sequence of the Arabidopsis and tomato pathogen Pseudomonas syringae pv. tomato DC3000.</title>
        <authorList>
            <person name="Buell C.R."/>
            <person name="Joardar V."/>
            <person name="Lindeberg M."/>
            <person name="Selengut J."/>
            <person name="Paulsen I.T."/>
            <person name="Gwinn M.L."/>
            <person name="Dodson R.J."/>
            <person name="DeBoy R.T."/>
            <person name="Durkin A.S."/>
            <person name="Kolonay J.F."/>
            <person name="Madupu R."/>
            <person name="Daugherty S.C."/>
            <person name="Brinkac L.M."/>
            <person name="Beanan M.J."/>
            <person name="Haft D.H."/>
            <person name="Nelson W.C."/>
            <person name="Davidsen T.M."/>
            <person name="Zafar N."/>
            <person name="Zhou L."/>
            <person name="Liu J."/>
            <person name="Yuan Q."/>
            <person name="Khouri H.M."/>
            <person name="Fedorova N.B."/>
            <person name="Tran B."/>
            <person name="Russell D."/>
            <person name="Berry K.J."/>
            <person name="Utterback T.R."/>
            <person name="Van Aken S.E."/>
            <person name="Feldblyum T.V."/>
            <person name="D'Ascenzo M."/>
            <person name="Deng W.-L."/>
            <person name="Ramos A.R."/>
            <person name="Alfano J.R."/>
            <person name="Cartinhour S."/>
            <person name="Chatterjee A.K."/>
            <person name="Delaney T.P."/>
            <person name="Lazarowitz S.G."/>
            <person name="Martin G.B."/>
            <person name="Schneider D.J."/>
            <person name="Tang X."/>
            <person name="Bender C.L."/>
            <person name="White O."/>
            <person name="Fraser C.M."/>
            <person name="Collmer A."/>
        </authorList>
    </citation>
    <scope>NUCLEOTIDE SEQUENCE [LARGE SCALE GENOMIC DNA]</scope>
    <source>
        <strain>ATCC BAA-871 / DC3000</strain>
    </source>
</reference>